<proteinExistence type="inferred from homology"/>
<organism>
    <name type="scientific">Caulobacter vibrioides (strain ATCC 19089 / CIP 103742 / CB 15)</name>
    <name type="common">Caulobacter crescentus</name>
    <dbReference type="NCBI Taxonomy" id="190650"/>
    <lineage>
        <taxon>Bacteria</taxon>
        <taxon>Pseudomonadati</taxon>
        <taxon>Pseudomonadota</taxon>
        <taxon>Alphaproteobacteria</taxon>
        <taxon>Caulobacterales</taxon>
        <taxon>Caulobacteraceae</taxon>
        <taxon>Caulobacter</taxon>
    </lineage>
</organism>
<accession>Q03845</accession>
<dbReference type="EMBL" id="M73782">
    <property type="protein sequence ID" value="AAA23041.1"/>
    <property type="molecule type" value="Genomic_DNA"/>
</dbReference>
<dbReference type="EMBL" id="M69228">
    <property type="protein sequence ID" value="AAA23040.1"/>
    <property type="status" value="ALT_SEQ"/>
    <property type="molecule type" value="Genomic_DNA"/>
</dbReference>
<dbReference type="EMBL" id="AE005673">
    <property type="protein sequence ID" value="AAK22894.1"/>
    <property type="molecule type" value="Genomic_DNA"/>
</dbReference>
<dbReference type="PIR" id="A42599">
    <property type="entry name" value="A42599"/>
</dbReference>
<dbReference type="RefSeq" id="NP_419726.1">
    <property type="nucleotide sequence ID" value="NC_002696.2"/>
</dbReference>
<dbReference type="RefSeq" id="WP_010918794.1">
    <property type="nucleotide sequence ID" value="NC_002696.2"/>
</dbReference>
<dbReference type="SMR" id="Q03845"/>
<dbReference type="STRING" id="190650.CC_0910"/>
<dbReference type="EnsemblBacteria" id="AAK22894">
    <property type="protein sequence ID" value="AAK22894"/>
    <property type="gene ID" value="CC_0910"/>
</dbReference>
<dbReference type="KEGG" id="ccr:CC_0910"/>
<dbReference type="PATRIC" id="fig|190650.5.peg.923"/>
<dbReference type="eggNOG" id="COG1298">
    <property type="taxonomic scope" value="Bacteria"/>
</dbReference>
<dbReference type="HOGENOM" id="CLU_015346_3_0_5"/>
<dbReference type="BioCyc" id="CAULO:CC0910-MONOMER"/>
<dbReference type="Proteomes" id="UP000001816">
    <property type="component" value="Chromosome"/>
</dbReference>
<dbReference type="GO" id="GO:0005886">
    <property type="term" value="C:plasma membrane"/>
    <property type="evidence" value="ECO:0007669"/>
    <property type="project" value="UniProtKB-SubCell"/>
</dbReference>
<dbReference type="GO" id="GO:0044780">
    <property type="term" value="P:bacterial-type flagellum assembly"/>
    <property type="evidence" value="ECO:0007669"/>
    <property type="project" value="InterPro"/>
</dbReference>
<dbReference type="GO" id="GO:0009306">
    <property type="term" value="P:protein secretion"/>
    <property type="evidence" value="ECO:0007669"/>
    <property type="project" value="InterPro"/>
</dbReference>
<dbReference type="Gene3D" id="3.40.30.60">
    <property type="entry name" value="FHIPEP family, domain 1"/>
    <property type="match status" value="1"/>
</dbReference>
<dbReference type="Gene3D" id="1.10.8.540">
    <property type="entry name" value="FHIPEP family, domain 3"/>
    <property type="match status" value="1"/>
</dbReference>
<dbReference type="Gene3D" id="3.40.50.12790">
    <property type="entry name" value="FHIPEP family, domain 4"/>
    <property type="match status" value="1"/>
</dbReference>
<dbReference type="InterPro" id="IPR042194">
    <property type="entry name" value="FHIPEP_1"/>
</dbReference>
<dbReference type="InterPro" id="IPR042193">
    <property type="entry name" value="FHIPEP_3"/>
</dbReference>
<dbReference type="InterPro" id="IPR042196">
    <property type="entry name" value="FHIPEP_4"/>
</dbReference>
<dbReference type="InterPro" id="IPR025505">
    <property type="entry name" value="FHIPEP_CS"/>
</dbReference>
<dbReference type="InterPro" id="IPR006301">
    <property type="entry name" value="FlhA"/>
</dbReference>
<dbReference type="InterPro" id="IPR001712">
    <property type="entry name" value="T3SS_FHIPEP"/>
</dbReference>
<dbReference type="NCBIfam" id="TIGR01398">
    <property type="entry name" value="FlhA"/>
    <property type="match status" value="1"/>
</dbReference>
<dbReference type="PANTHER" id="PTHR30161:SF1">
    <property type="entry name" value="FLAGELLAR BIOSYNTHESIS PROTEIN FLHA-RELATED"/>
    <property type="match status" value="1"/>
</dbReference>
<dbReference type="PANTHER" id="PTHR30161">
    <property type="entry name" value="FLAGELLAR EXPORT PROTEIN, MEMBRANE FLHA SUBUNIT-RELATED"/>
    <property type="match status" value="1"/>
</dbReference>
<dbReference type="Pfam" id="PF00771">
    <property type="entry name" value="FHIPEP"/>
    <property type="match status" value="1"/>
</dbReference>
<dbReference type="PIRSF" id="PIRSF005419">
    <property type="entry name" value="FlhA"/>
    <property type="match status" value="1"/>
</dbReference>
<dbReference type="PRINTS" id="PR00949">
    <property type="entry name" value="TYPE3IMAPROT"/>
</dbReference>
<dbReference type="PROSITE" id="PS00994">
    <property type="entry name" value="FHIPEP"/>
    <property type="match status" value="1"/>
</dbReference>
<keyword id="KW-1005">Bacterial flagellum biogenesis</keyword>
<keyword id="KW-1006">Bacterial flagellum protein export</keyword>
<keyword id="KW-0997">Cell inner membrane</keyword>
<keyword id="KW-1003">Cell membrane</keyword>
<keyword id="KW-0472">Membrane</keyword>
<keyword id="KW-0653">Protein transport</keyword>
<keyword id="KW-1185">Reference proteome</keyword>
<keyword id="KW-0812">Transmembrane</keyword>
<keyword id="KW-1133">Transmembrane helix</keyword>
<keyword id="KW-0813">Transport</keyword>
<reference key="1">
    <citation type="journal article" date="1991" name="J. Bacteriol.">
        <title>The cell cycle-regulated flagellar gene flbF of Caulobacter crescentus is homologous to a virulence locus (lcrD) of Yersinia pestis.</title>
        <authorList>
            <person name="Ramakrishnan G."/>
            <person name="Zhao J.L."/>
            <person name="Newton A."/>
        </authorList>
    </citation>
    <scope>NUCLEOTIDE SEQUENCE [GENOMIC DNA]</scope>
    <source>
        <strain>ATCC 19089 / CIP 103742 / CB 15</strain>
    </source>
</reference>
<reference key="2">
    <citation type="journal article" date="1992" name="J. Bacteriol.">
        <title>Characterization of the Caulobacter crescentus flbF promoter and identification of the inferred FlbF product as a homolog of the LcrD protein from a Yersinia enterocolitica virulence plasmid.</title>
        <authorList>
            <person name="Sanders L.A."/>
            <person name="van Way S."/>
            <person name="Mullin D.A."/>
        </authorList>
    </citation>
    <scope>NUCLEOTIDE SEQUENCE [GENOMIC DNA]</scope>
    <source>
        <strain>ATCC 19089 / CIP 103742 / CB 15</strain>
    </source>
</reference>
<reference key="3">
    <citation type="journal article" date="2001" name="Proc. Natl. Acad. Sci. U.S.A.">
        <title>Complete genome sequence of Caulobacter crescentus.</title>
        <authorList>
            <person name="Nierman W.C."/>
            <person name="Feldblyum T.V."/>
            <person name="Laub M.T."/>
            <person name="Paulsen I.T."/>
            <person name="Nelson K.E."/>
            <person name="Eisen J.A."/>
            <person name="Heidelberg J.F."/>
            <person name="Alley M.R.K."/>
            <person name="Ohta N."/>
            <person name="Maddock J.R."/>
            <person name="Potocka I."/>
            <person name="Nelson W.C."/>
            <person name="Newton A."/>
            <person name="Stephens C."/>
            <person name="Phadke N.D."/>
            <person name="Ely B."/>
            <person name="DeBoy R.T."/>
            <person name="Dodson R.J."/>
            <person name="Durkin A.S."/>
            <person name="Gwinn M.L."/>
            <person name="Haft D.H."/>
            <person name="Kolonay J.F."/>
            <person name="Smit J."/>
            <person name="Craven M.B."/>
            <person name="Khouri H.M."/>
            <person name="Shetty J."/>
            <person name="Berry K.J."/>
            <person name="Utterback T.R."/>
            <person name="Tran K."/>
            <person name="Wolf A.M."/>
            <person name="Vamathevan J.J."/>
            <person name="Ermolaeva M.D."/>
            <person name="White O."/>
            <person name="Salzberg S.L."/>
            <person name="Venter J.C."/>
            <person name="Shapiro L."/>
            <person name="Fraser C.M."/>
        </authorList>
    </citation>
    <scope>NUCLEOTIDE SEQUENCE [LARGE SCALE GENOMIC DNA]</scope>
    <source>
        <strain>ATCC 19089 / CIP 103742 / CB 15</strain>
    </source>
</reference>
<evidence type="ECO:0000250" key="1"/>
<evidence type="ECO:0000255" key="2"/>
<evidence type="ECO:0000305" key="3"/>
<feature type="chain" id="PRO_0000190015" description="Flagellar biosynthesis protein FlhA">
    <location>
        <begin position="1"/>
        <end position="700"/>
    </location>
</feature>
<feature type="transmembrane region" description="Helical" evidence="2">
    <location>
        <begin position="27"/>
        <end position="44"/>
    </location>
</feature>
<feature type="transmembrane region" description="Helical" evidence="2">
    <location>
        <begin position="48"/>
        <end position="65"/>
    </location>
</feature>
<feature type="transmembrane region" description="Helical" evidence="2">
    <location>
        <begin position="76"/>
        <end position="93"/>
    </location>
</feature>
<feature type="transmembrane region" description="Helical" evidence="2">
    <location>
        <begin position="129"/>
        <end position="146"/>
    </location>
</feature>
<feature type="transmembrane region" description="Helical" evidence="2">
    <location>
        <begin position="218"/>
        <end position="235"/>
    </location>
</feature>
<feature type="transmembrane region" description="Helical" evidence="2">
    <location>
        <begin position="256"/>
        <end position="273"/>
    </location>
</feature>
<feature type="transmembrane region" description="Helical" evidence="2">
    <location>
        <begin position="306"/>
        <end position="323"/>
    </location>
</feature>
<feature type="transmembrane region" description="Helical" evidence="2">
    <location>
        <begin position="364"/>
        <end position="380"/>
    </location>
</feature>
<name>FLHA_CAUVC</name>
<protein>
    <recommendedName>
        <fullName>Flagellar biosynthesis protein FlhA</fullName>
    </recommendedName>
</protein>
<comment type="function">
    <text evidence="1">Required for formation of the rod structure of the flagellar apparatus. Together with FliI and FliH, may constitute the export apparatus of flagellin (By similarity).</text>
</comment>
<comment type="subcellular location">
    <subcellularLocation>
        <location evidence="3">Cell inner membrane</location>
        <topology evidence="3">Multi-pass membrane protein</topology>
    </subcellularLocation>
</comment>
<comment type="similarity">
    <text evidence="3">Belongs to the FHIPEP (flagella/HR/invasion proteins export pore) family.</text>
</comment>
<sequence>MADAAAPNASSMPSAKSLLDGLMRGEMGLALGVVGIIVLLIIPVPAPLLDVLLAISLTGSVLILMTAILIKKPLEFTSFPTVLLVTTLFRLGLNIASTRLILSHGQEGTGGAGAVIEAFGHLMMQGNFVIGVIVFIILIVVNFMVVTKGSGRIAEVAARFTLDSMPGKQMAIDADLSTGLISQDEAKIRRKELEQESTFFGAMDGASKFVKGDAIAGLIITAINIIGGIIIGVVQHKMPFGDAASTYTIMTIGDGLVSQIPALIISIAAGMVVSKAGVEGSADKALTTQLAMNPVGLGMVSASSGIIALIPGMPIFPFAAMALAAGALAYKRVQDAKKPKALDPADLEAAAPSEPEEEPISASLAIDDVKIELGYGLLTLINDLDGRKLTDQIRALRKTLASEYGFVMPPVRILDNMRLANQGYAIRIKEMEAGAGEVRLGCLMCMDPRGGQVELPGEHVREPAFGLPATWIADDLREEATFRGYTVVDPATVLTTHLTEILKENMADLLSYAEVQKLLKELPETQKKLVDDLIPGTVTATTVQRVLQSLLRERVSIRDLPQILEGVGEAAPHTASVTQLVEQVRARLARQLCWANRGDDGALPIITLSADWEQAFAEALIGPGDDKQLALPPSRLQDFIRGVRDSFERAALAGEAPVLLTSPGVRPYVRSIIERFRGQTVVMSQNEIHPRARLKTVGMV</sequence>
<gene>
    <name type="primary">flhA</name>
    <name type="synonym">flbF</name>
    <name type="ordered locus">CC_0910</name>
</gene>